<name>AROA_STRPZ</name>
<organism>
    <name type="scientific">Streptococcus pyogenes serotype M49 (strain NZ131)</name>
    <dbReference type="NCBI Taxonomy" id="471876"/>
    <lineage>
        <taxon>Bacteria</taxon>
        <taxon>Bacillati</taxon>
        <taxon>Bacillota</taxon>
        <taxon>Bacilli</taxon>
        <taxon>Lactobacillales</taxon>
        <taxon>Streptococcaceae</taxon>
        <taxon>Streptococcus</taxon>
    </lineage>
</organism>
<protein>
    <recommendedName>
        <fullName evidence="1">3-phosphoshikimate 1-carboxyvinyltransferase</fullName>
        <ecNumber evidence="1">2.5.1.19</ecNumber>
    </recommendedName>
    <alternativeName>
        <fullName evidence="1">5-enolpyruvylshikimate-3-phosphate synthase</fullName>
        <shortName evidence="1">EPSP synthase</shortName>
        <shortName evidence="1">EPSPS</shortName>
    </alternativeName>
</protein>
<evidence type="ECO:0000255" key="1">
    <source>
        <dbReference type="HAMAP-Rule" id="MF_00210"/>
    </source>
</evidence>
<accession>B5XM07</accession>
<gene>
    <name evidence="1" type="primary">aroA</name>
    <name type="ordered locus">Spy49_1075c</name>
</gene>
<dbReference type="EC" id="2.5.1.19" evidence="1"/>
<dbReference type="EMBL" id="CP000829">
    <property type="protein sequence ID" value="ACI61369.1"/>
    <property type="molecule type" value="Genomic_DNA"/>
</dbReference>
<dbReference type="SMR" id="B5XM07"/>
<dbReference type="KEGG" id="soz:Spy49_1075c"/>
<dbReference type="HOGENOM" id="CLU_024321_0_1_9"/>
<dbReference type="UniPathway" id="UPA00053">
    <property type="reaction ID" value="UER00089"/>
</dbReference>
<dbReference type="Proteomes" id="UP000001039">
    <property type="component" value="Chromosome"/>
</dbReference>
<dbReference type="GO" id="GO:0005737">
    <property type="term" value="C:cytoplasm"/>
    <property type="evidence" value="ECO:0007669"/>
    <property type="project" value="UniProtKB-SubCell"/>
</dbReference>
<dbReference type="GO" id="GO:0003866">
    <property type="term" value="F:3-phosphoshikimate 1-carboxyvinyltransferase activity"/>
    <property type="evidence" value="ECO:0007669"/>
    <property type="project" value="UniProtKB-UniRule"/>
</dbReference>
<dbReference type="GO" id="GO:0008652">
    <property type="term" value="P:amino acid biosynthetic process"/>
    <property type="evidence" value="ECO:0007669"/>
    <property type="project" value="UniProtKB-KW"/>
</dbReference>
<dbReference type="GO" id="GO:0009073">
    <property type="term" value="P:aromatic amino acid family biosynthetic process"/>
    <property type="evidence" value="ECO:0007669"/>
    <property type="project" value="UniProtKB-KW"/>
</dbReference>
<dbReference type="GO" id="GO:0009423">
    <property type="term" value="P:chorismate biosynthetic process"/>
    <property type="evidence" value="ECO:0007669"/>
    <property type="project" value="UniProtKB-UniRule"/>
</dbReference>
<dbReference type="CDD" id="cd01556">
    <property type="entry name" value="EPSP_synthase"/>
    <property type="match status" value="1"/>
</dbReference>
<dbReference type="FunFam" id="3.65.10.10:FF:000005">
    <property type="entry name" value="3-phosphoshikimate 1-carboxyvinyltransferase"/>
    <property type="match status" value="1"/>
</dbReference>
<dbReference type="FunFam" id="3.65.10.10:FF:000006">
    <property type="entry name" value="3-phosphoshikimate 1-carboxyvinyltransferase"/>
    <property type="match status" value="1"/>
</dbReference>
<dbReference type="Gene3D" id="3.65.10.10">
    <property type="entry name" value="Enolpyruvate transferase domain"/>
    <property type="match status" value="2"/>
</dbReference>
<dbReference type="HAMAP" id="MF_00210">
    <property type="entry name" value="EPSP_synth"/>
    <property type="match status" value="1"/>
</dbReference>
<dbReference type="InterPro" id="IPR001986">
    <property type="entry name" value="Enolpyruvate_Tfrase_dom"/>
</dbReference>
<dbReference type="InterPro" id="IPR036968">
    <property type="entry name" value="Enolpyruvate_Tfrase_sf"/>
</dbReference>
<dbReference type="InterPro" id="IPR006264">
    <property type="entry name" value="EPSP_synthase"/>
</dbReference>
<dbReference type="InterPro" id="IPR023193">
    <property type="entry name" value="EPSP_synthase_CS"/>
</dbReference>
<dbReference type="InterPro" id="IPR013792">
    <property type="entry name" value="RNA3'P_cycl/enolpyr_Trfase_a/b"/>
</dbReference>
<dbReference type="NCBIfam" id="TIGR01356">
    <property type="entry name" value="aroA"/>
    <property type="match status" value="1"/>
</dbReference>
<dbReference type="PANTHER" id="PTHR21090">
    <property type="entry name" value="AROM/DEHYDROQUINATE SYNTHASE"/>
    <property type="match status" value="1"/>
</dbReference>
<dbReference type="PANTHER" id="PTHR21090:SF5">
    <property type="entry name" value="PENTAFUNCTIONAL AROM POLYPEPTIDE"/>
    <property type="match status" value="1"/>
</dbReference>
<dbReference type="Pfam" id="PF00275">
    <property type="entry name" value="EPSP_synthase"/>
    <property type="match status" value="1"/>
</dbReference>
<dbReference type="PIRSF" id="PIRSF000505">
    <property type="entry name" value="EPSPS"/>
    <property type="match status" value="1"/>
</dbReference>
<dbReference type="SUPFAM" id="SSF55205">
    <property type="entry name" value="EPT/RTPC-like"/>
    <property type="match status" value="1"/>
</dbReference>
<dbReference type="PROSITE" id="PS00104">
    <property type="entry name" value="EPSP_SYNTHASE_1"/>
    <property type="match status" value="1"/>
</dbReference>
<dbReference type="PROSITE" id="PS00885">
    <property type="entry name" value="EPSP_SYNTHASE_2"/>
    <property type="match status" value="1"/>
</dbReference>
<comment type="function">
    <text evidence="1">Catalyzes the transfer of the enolpyruvyl moiety of phosphoenolpyruvate (PEP) to the 5-hydroxyl of shikimate-3-phosphate (S3P) to produce enolpyruvyl shikimate-3-phosphate and inorganic phosphate.</text>
</comment>
<comment type="catalytic activity">
    <reaction evidence="1">
        <text>3-phosphoshikimate + phosphoenolpyruvate = 5-O-(1-carboxyvinyl)-3-phosphoshikimate + phosphate</text>
        <dbReference type="Rhea" id="RHEA:21256"/>
        <dbReference type="ChEBI" id="CHEBI:43474"/>
        <dbReference type="ChEBI" id="CHEBI:57701"/>
        <dbReference type="ChEBI" id="CHEBI:58702"/>
        <dbReference type="ChEBI" id="CHEBI:145989"/>
        <dbReference type="EC" id="2.5.1.19"/>
    </reaction>
    <physiologicalReaction direction="left-to-right" evidence="1">
        <dbReference type="Rhea" id="RHEA:21257"/>
    </physiologicalReaction>
</comment>
<comment type="pathway">
    <text evidence="1">Metabolic intermediate biosynthesis; chorismate biosynthesis; chorismate from D-erythrose 4-phosphate and phosphoenolpyruvate: step 6/7.</text>
</comment>
<comment type="subunit">
    <text evidence="1">Monomer.</text>
</comment>
<comment type="subcellular location">
    <subcellularLocation>
        <location evidence="1">Cytoplasm</location>
    </subcellularLocation>
</comment>
<comment type="similarity">
    <text evidence="1">Belongs to the EPSP synthase family.</text>
</comment>
<keyword id="KW-0028">Amino-acid biosynthesis</keyword>
<keyword id="KW-0057">Aromatic amino acid biosynthesis</keyword>
<keyword id="KW-0963">Cytoplasm</keyword>
<keyword id="KW-0808">Transferase</keyword>
<proteinExistence type="inferred from homology"/>
<feature type="chain" id="PRO_1000189567" description="3-phosphoshikimate 1-carboxyvinyltransferase">
    <location>
        <begin position="1"/>
        <end position="427"/>
    </location>
</feature>
<feature type="active site" description="Proton acceptor" evidence="1">
    <location>
        <position position="312"/>
    </location>
</feature>
<feature type="binding site" evidence="1">
    <location>
        <position position="20"/>
    </location>
    <ligand>
        <name>3-phosphoshikimate</name>
        <dbReference type="ChEBI" id="CHEBI:145989"/>
    </ligand>
</feature>
<feature type="binding site" evidence="1">
    <location>
        <position position="20"/>
    </location>
    <ligand>
        <name>phosphoenolpyruvate</name>
        <dbReference type="ChEBI" id="CHEBI:58702"/>
    </ligand>
</feature>
<feature type="binding site" evidence="1">
    <location>
        <position position="21"/>
    </location>
    <ligand>
        <name>3-phosphoshikimate</name>
        <dbReference type="ChEBI" id="CHEBI:145989"/>
    </ligand>
</feature>
<feature type="binding site" evidence="1">
    <location>
        <position position="25"/>
    </location>
    <ligand>
        <name>3-phosphoshikimate</name>
        <dbReference type="ChEBI" id="CHEBI:145989"/>
    </ligand>
</feature>
<feature type="binding site" evidence="1">
    <location>
        <position position="92"/>
    </location>
    <ligand>
        <name>phosphoenolpyruvate</name>
        <dbReference type="ChEBI" id="CHEBI:58702"/>
    </ligand>
</feature>
<feature type="binding site" evidence="1">
    <location>
        <position position="120"/>
    </location>
    <ligand>
        <name>phosphoenolpyruvate</name>
        <dbReference type="ChEBI" id="CHEBI:58702"/>
    </ligand>
</feature>
<feature type="binding site" evidence="1">
    <location>
        <position position="166"/>
    </location>
    <ligand>
        <name>3-phosphoshikimate</name>
        <dbReference type="ChEBI" id="CHEBI:145989"/>
    </ligand>
</feature>
<feature type="binding site" evidence="1">
    <location>
        <position position="168"/>
    </location>
    <ligand>
        <name>3-phosphoshikimate</name>
        <dbReference type="ChEBI" id="CHEBI:145989"/>
    </ligand>
</feature>
<feature type="binding site" evidence="1">
    <location>
        <position position="168"/>
    </location>
    <ligand>
        <name>phosphoenolpyruvate</name>
        <dbReference type="ChEBI" id="CHEBI:58702"/>
    </ligand>
</feature>
<feature type="binding site" evidence="1">
    <location>
        <position position="312"/>
    </location>
    <ligand>
        <name>3-phosphoshikimate</name>
        <dbReference type="ChEBI" id="CHEBI:145989"/>
    </ligand>
</feature>
<feature type="binding site" evidence="1">
    <location>
        <position position="339"/>
    </location>
    <ligand>
        <name>3-phosphoshikimate</name>
        <dbReference type="ChEBI" id="CHEBI:145989"/>
    </ligand>
</feature>
<feature type="binding site" evidence="1">
    <location>
        <position position="343"/>
    </location>
    <ligand>
        <name>phosphoenolpyruvate</name>
        <dbReference type="ChEBI" id="CHEBI:58702"/>
    </ligand>
</feature>
<feature type="binding site" evidence="1">
    <location>
        <position position="385"/>
    </location>
    <ligand>
        <name>phosphoenolpyruvate</name>
        <dbReference type="ChEBI" id="CHEBI:58702"/>
    </ligand>
</feature>
<sequence>MKLRTNAGPLQGTIQVPGDKSISHRAVILGAVAKGETRVKGLLKGEDVLSTIQAFRNLGVRIEEKDDQLVIEGQGFQGLTAPCQTLNMGNSGTSMRLIAGLLAGQPFSVKMIGDESLSKRPMDRIVYPLKQMGVEISGETDRQFPPLQLQGNRNLQPITYTLPISSAQVKSAILLAALQAKGTTQVVEKEITRNHTEEMIQQFGGRLIVDGKRITLVGPQQLTAQEITVPGDISSAAFWLVAGLIIPGSELLLKNVGVNPTRTGILEVVEKMGAQIVYEDMNKKEQVTSIRVVYSRLKGTIISGGLIPRLIDELPIIALLATQAQGTTCIKDAQELRVKETDRIQVVTDTLNSMGANIKATADGMIIKGPTVLYGANTSTYGDHRIGMMTAIAALLVKQGQVHLDKEEAIMTSYPTFFKDLERLCHD</sequence>
<reference key="1">
    <citation type="journal article" date="2008" name="J. Bacteriol.">
        <title>Genome sequence of a nephritogenic and highly transformable M49 strain of Streptococcus pyogenes.</title>
        <authorList>
            <person name="McShan W.M."/>
            <person name="Ferretti J.J."/>
            <person name="Karasawa T."/>
            <person name="Suvorov A.N."/>
            <person name="Lin S."/>
            <person name="Qin B."/>
            <person name="Jia H."/>
            <person name="Kenton S."/>
            <person name="Najar F."/>
            <person name="Wu H."/>
            <person name="Scott J."/>
            <person name="Roe B.A."/>
            <person name="Savic D.J."/>
        </authorList>
    </citation>
    <scope>NUCLEOTIDE SEQUENCE [LARGE SCALE GENOMIC DNA]</scope>
    <source>
        <strain>NZ131</strain>
    </source>
</reference>